<feature type="chain" id="PRO_0000223575" description="Regulator of G-protein signaling rgs-10">
    <location>
        <begin position="1"/>
        <end position="270"/>
    </location>
</feature>
<feature type="domain" description="RGS" evidence="1">
    <location>
        <begin position="135"/>
        <end position="252"/>
    </location>
</feature>
<keyword id="KW-0217">Developmental protein</keyword>
<keyword id="KW-1185">Reference proteome</keyword>
<keyword id="KW-0734">Signal transduction inhibitor</keyword>
<dbReference type="EMBL" id="Z83227">
    <property type="protein sequence ID" value="CAB05727.1"/>
    <property type="molecule type" value="Genomic_DNA"/>
</dbReference>
<dbReference type="PIR" id="T22213">
    <property type="entry name" value="T22213"/>
</dbReference>
<dbReference type="RefSeq" id="NP_510482.1">
    <property type="nucleotide sequence ID" value="NM_078081.2"/>
</dbReference>
<dbReference type="SMR" id="O45523"/>
<dbReference type="FunCoup" id="O45523">
    <property type="interactions" value="2"/>
</dbReference>
<dbReference type="STRING" id="6239.F45B8.2.1"/>
<dbReference type="PaxDb" id="6239-F45B8.2"/>
<dbReference type="EnsemblMetazoa" id="F45B8.2.1">
    <property type="protein sequence ID" value="F45B8.2.1"/>
    <property type="gene ID" value="WBGene00004353"/>
</dbReference>
<dbReference type="GeneID" id="185764"/>
<dbReference type="KEGG" id="cel:CELE_F45B8.2"/>
<dbReference type="UCSC" id="F45B8.2">
    <property type="organism name" value="c. elegans"/>
</dbReference>
<dbReference type="AGR" id="WB:WBGene00004353"/>
<dbReference type="CTD" id="185764"/>
<dbReference type="WormBase" id="F45B8.2">
    <property type="protein sequence ID" value="CE10430"/>
    <property type="gene ID" value="WBGene00004353"/>
    <property type="gene designation" value="rgs-10"/>
</dbReference>
<dbReference type="eggNOG" id="KOG3589">
    <property type="taxonomic scope" value="Eukaryota"/>
</dbReference>
<dbReference type="GeneTree" id="ENSGT00970000196865"/>
<dbReference type="HOGENOM" id="CLU_1031475_0_0_1"/>
<dbReference type="InParanoid" id="O45523"/>
<dbReference type="OMA" id="RIRECNM"/>
<dbReference type="OrthoDB" id="196547at2759"/>
<dbReference type="PhylomeDB" id="O45523"/>
<dbReference type="Reactome" id="R-CEL-416476">
    <property type="pathway name" value="G alpha (q) signalling events"/>
</dbReference>
<dbReference type="Reactome" id="R-CEL-418594">
    <property type="pathway name" value="G alpha (i) signalling events"/>
</dbReference>
<dbReference type="Reactome" id="R-CEL-418597">
    <property type="pathway name" value="G alpha (z) signalling events"/>
</dbReference>
<dbReference type="PRO" id="PR:O45523"/>
<dbReference type="Proteomes" id="UP000001940">
    <property type="component" value="Chromosome X"/>
</dbReference>
<dbReference type="Bgee" id="WBGene00004353">
    <property type="expression patterns" value="Expressed in embryo and 2 other cell types or tissues"/>
</dbReference>
<dbReference type="GO" id="GO:0009968">
    <property type="term" value="P:negative regulation of signal transduction"/>
    <property type="evidence" value="ECO:0007669"/>
    <property type="project" value="UniProtKB-KW"/>
</dbReference>
<dbReference type="CDD" id="cd07440">
    <property type="entry name" value="RGS"/>
    <property type="match status" value="1"/>
</dbReference>
<dbReference type="Gene3D" id="1.10.167.10">
    <property type="entry name" value="Regulator of G-protein Signalling 4, domain 2"/>
    <property type="match status" value="1"/>
</dbReference>
<dbReference type="InterPro" id="IPR016137">
    <property type="entry name" value="RGS"/>
</dbReference>
<dbReference type="InterPro" id="IPR036305">
    <property type="entry name" value="RGS_sf"/>
</dbReference>
<dbReference type="InterPro" id="IPR044926">
    <property type="entry name" value="RGS_subdomain_2"/>
</dbReference>
<dbReference type="PANTHER" id="PTHR10845">
    <property type="entry name" value="REGULATOR OF G PROTEIN SIGNALING"/>
    <property type="match status" value="1"/>
</dbReference>
<dbReference type="PANTHER" id="PTHR10845:SF259">
    <property type="entry name" value="RGS DOMAIN-CONTAINING PROTEIN-RELATED"/>
    <property type="match status" value="1"/>
</dbReference>
<dbReference type="Pfam" id="PF00615">
    <property type="entry name" value="RGS"/>
    <property type="match status" value="1"/>
</dbReference>
<dbReference type="PRINTS" id="PR01301">
    <property type="entry name" value="RGSPROTEIN"/>
</dbReference>
<dbReference type="SMART" id="SM00315">
    <property type="entry name" value="RGS"/>
    <property type="match status" value="1"/>
</dbReference>
<dbReference type="SUPFAM" id="SSF48097">
    <property type="entry name" value="Regulator of G-protein signaling, RGS"/>
    <property type="match status" value="1"/>
</dbReference>
<dbReference type="PROSITE" id="PS50132">
    <property type="entry name" value="RGS"/>
    <property type="match status" value="1"/>
</dbReference>
<gene>
    <name type="primary">rgs-10</name>
    <name type="ORF">F45B8.2</name>
</gene>
<protein>
    <recommendedName>
        <fullName>Regulator of G-protein signaling rgs-10</fullName>
    </recommendedName>
</protein>
<accession>O45523</accession>
<comment type="function">
    <text evidence="2">Shown to have a role in viability and embryogenesis.</text>
</comment>
<comment type="disruption phenotype">
    <text evidence="2">Sterility and embryonic lethality.</text>
</comment>
<proteinExistence type="predicted"/>
<organism>
    <name type="scientific">Caenorhabditis elegans</name>
    <dbReference type="NCBI Taxonomy" id="6239"/>
    <lineage>
        <taxon>Eukaryota</taxon>
        <taxon>Metazoa</taxon>
        <taxon>Ecdysozoa</taxon>
        <taxon>Nematoda</taxon>
        <taxon>Chromadorea</taxon>
        <taxon>Rhabditida</taxon>
        <taxon>Rhabditina</taxon>
        <taxon>Rhabditomorpha</taxon>
        <taxon>Rhabditoidea</taxon>
        <taxon>Rhabditidae</taxon>
        <taxon>Peloderinae</taxon>
        <taxon>Caenorhabditis</taxon>
    </lineage>
</organism>
<sequence>MSLAVFSPCDVASKLLSEVVGEKYPKVDDDDSIVEPVTSLCLPQLSYEDFHHFSVIPLWNKTFPCRLATEWNPKNKKDAPPKKKNALVILERVASRSNQNAVSRVINILRSKVHLMFSSSNELPSSEDVERWKKSPETLAASEYGCNLFIQFLKEQTSENEVDFWLDCQKFRSSKMSSRQNEARRIFDEYFAMGSPKKIYIERYLWCVVQAYLVNDPGWRHTFDVAQAYVGLKLAKKSHKKFLEDPLYLDLVELVTSGVNYNKFWHDKLE</sequence>
<evidence type="ECO:0000255" key="1">
    <source>
        <dbReference type="PROSITE-ProRule" id="PRU00171"/>
    </source>
</evidence>
<evidence type="ECO:0000269" key="2">
    <source>
    </source>
</evidence>
<name>RGS10_CAEEL</name>
<reference key="1">
    <citation type="journal article" date="1998" name="Science">
        <title>Genome sequence of the nematode C. elegans: a platform for investigating biology.</title>
        <authorList>
            <consortium name="The C. elegans sequencing consortium"/>
        </authorList>
    </citation>
    <scope>NUCLEOTIDE SEQUENCE [LARGE SCALE GENOMIC DNA]</scope>
    <source>
        <strain>Bristol N2</strain>
    </source>
</reference>
<reference key="2">
    <citation type="journal article" date="2005" name="Genome Res.">
        <title>New genes with roles in the C. elegans embryo revealed using RNAi of ovary-enriched ORFeome clones.</title>
        <authorList>
            <person name="Fernandez A.G."/>
            <person name="Gunsalus K.C."/>
            <person name="Huang J."/>
            <person name="Chuang L.S."/>
            <person name="Ying N."/>
            <person name="Liang H.L."/>
            <person name="Tang C."/>
            <person name="Schetter A.J."/>
            <person name="Zegar C."/>
            <person name="Rual J.F."/>
            <person name="Hill D.E."/>
            <person name="Reinke V."/>
            <person name="Vidal M."/>
            <person name="Piano F."/>
        </authorList>
    </citation>
    <scope>FUNCTION</scope>
    <scope>DISRUPTION PHENOTYPE</scope>
</reference>